<proteinExistence type="inferred from homology"/>
<dbReference type="EC" id="2.7.7.60" evidence="1"/>
<dbReference type="EMBL" id="AM884176">
    <property type="protein sequence ID" value="CAP04161.1"/>
    <property type="molecule type" value="Genomic_DNA"/>
</dbReference>
<dbReference type="RefSeq" id="WP_009873830.1">
    <property type="nucleotide sequence ID" value="NC_010287.1"/>
</dbReference>
<dbReference type="RefSeq" id="YP_001654794.1">
    <property type="nucleotide sequence ID" value="NC_010287.1"/>
</dbReference>
<dbReference type="SMR" id="B0B835"/>
<dbReference type="KEGG" id="ctb:CTL0722"/>
<dbReference type="PATRIC" id="fig|471472.4.peg.775"/>
<dbReference type="HOGENOM" id="CLU_061281_2_3_0"/>
<dbReference type="UniPathway" id="UPA00056">
    <property type="reaction ID" value="UER00093"/>
</dbReference>
<dbReference type="Proteomes" id="UP001154402">
    <property type="component" value="Chromosome"/>
</dbReference>
<dbReference type="GO" id="GO:0050518">
    <property type="term" value="F:2-C-methyl-D-erythritol 4-phosphate cytidylyltransferase activity"/>
    <property type="evidence" value="ECO:0007669"/>
    <property type="project" value="UniProtKB-UniRule"/>
</dbReference>
<dbReference type="GO" id="GO:0019288">
    <property type="term" value="P:isopentenyl diphosphate biosynthetic process, methylerythritol 4-phosphate pathway"/>
    <property type="evidence" value="ECO:0007669"/>
    <property type="project" value="UniProtKB-UniRule"/>
</dbReference>
<dbReference type="CDD" id="cd02516">
    <property type="entry name" value="CDP-ME_synthetase"/>
    <property type="match status" value="1"/>
</dbReference>
<dbReference type="FunFam" id="3.90.550.10:FF:000269">
    <property type="entry name" value="2-C-methyl-D-erythritol 4-phosphate cytidylyltransferase"/>
    <property type="match status" value="1"/>
</dbReference>
<dbReference type="Gene3D" id="3.90.550.10">
    <property type="entry name" value="Spore Coat Polysaccharide Biosynthesis Protein SpsA, Chain A"/>
    <property type="match status" value="1"/>
</dbReference>
<dbReference type="HAMAP" id="MF_00108">
    <property type="entry name" value="IspD"/>
    <property type="match status" value="1"/>
</dbReference>
<dbReference type="InterPro" id="IPR001228">
    <property type="entry name" value="IspD"/>
</dbReference>
<dbReference type="InterPro" id="IPR034683">
    <property type="entry name" value="IspD/TarI"/>
</dbReference>
<dbReference type="InterPro" id="IPR050088">
    <property type="entry name" value="IspD/TarI_cytidylyltransf_bact"/>
</dbReference>
<dbReference type="InterPro" id="IPR018294">
    <property type="entry name" value="ISPD_synthase_CS"/>
</dbReference>
<dbReference type="InterPro" id="IPR029044">
    <property type="entry name" value="Nucleotide-diphossugar_trans"/>
</dbReference>
<dbReference type="NCBIfam" id="TIGR00453">
    <property type="entry name" value="ispD"/>
    <property type="match status" value="1"/>
</dbReference>
<dbReference type="PANTHER" id="PTHR32125">
    <property type="entry name" value="2-C-METHYL-D-ERYTHRITOL 4-PHOSPHATE CYTIDYLYLTRANSFERASE, CHLOROPLASTIC"/>
    <property type="match status" value="1"/>
</dbReference>
<dbReference type="PANTHER" id="PTHR32125:SF4">
    <property type="entry name" value="2-C-METHYL-D-ERYTHRITOL 4-PHOSPHATE CYTIDYLYLTRANSFERASE, CHLOROPLASTIC"/>
    <property type="match status" value="1"/>
</dbReference>
<dbReference type="Pfam" id="PF01128">
    <property type="entry name" value="IspD"/>
    <property type="match status" value="1"/>
</dbReference>
<dbReference type="SUPFAM" id="SSF53448">
    <property type="entry name" value="Nucleotide-diphospho-sugar transferases"/>
    <property type="match status" value="1"/>
</dbReference>
<dbReference type="PROSITE" id="PS01295">
    <property type="entry name" value="ISPD"/>
    <property type="match status" value="1"/>
</dbReference>
<keyword id="KW-0414">Isoprene biosynthesis</keyword>
<keyword id="KW-0548">Nucleotidyltransferase</keyword>
<keyword id="KW-0808">Transferase</keyword>
<feature type="chain" id="PRO_1000094318" description="2-C-methyl-D-erythritol 4-phosphate cytidylyltransferase">
    <location>
        <begin position="1"/>
        <end position="219"/>
    </location>
</feature>
<feature type="site" description="Transition state stabilizer" evidence="1">
    <location>
        <position position="17"/>
    </location>
</feature>
<feature type="site" description="Transition state stabilizer" evidence="1">
    <location>
        <position position="24"/>
    </location>
</feature>
<feature type="site" description="Positions MEP for the nucleophilic attack" evidence="1">
    <location>
        <position position="142"/>
    </location>
</feature>
<feature type="site" description="Positions MEP for the nucleophilic attack" evidence="1">
    <location>
        <position position="198"/>
    </location>
</feature>
<organism>
    <name type="scientific">Chlamydia trachomatis serovar L2 (strain ATCC VR-902B / DSM 19102 / 434/Bu)</name>
    <dbReference type="NCBI Taxonomy" id="471472"/>
    <lineage>
        <taxon>Bacteria</taxon>
        <taxon>Pseudomonadati</taxon>
        <taxon>Chlamydiota</taxon>
        <taxon>Chlamydiia</taxon>
        <taxon>Chlamydiales</taxon>
        <taxon>Chlamydiaceae</taxon>
        <taxon>Chlamydia/Chlamydophila group</taxon>
        <taxon>Chlamydia</taxon>
    </lineage>
</organism>
<evidence type="ECO:0000255" key="1">
    <source>
        <dbReference type="HAMAP-Rule" id="MF_00108"/>
    </source>
</evidence>
<accession>B0B835</accession>
<reference key="1">
    <citation type="journal article" date="2008" name="Genome Res.">
        <title>Chlamydia trachomatis: genome sequence analysis of lymphogranuloma venereum isolates.</title>
        <authorList>
            <person name="Thomson N.R."/>
            <person name="Holden M.T.G."/>
            <person name="Carder C."/>
            <person name="Lennard N."/>
            <person name="Lockey S.J."/>
            <person name="Marsh P."/>
            <person name="Skipp P."/>
            <person name="O'Connor C.D."/>
            <person name="Goodhead I."/>
            <person name="Norbertzcak H."/>
            <person name="Harris B."/>
            <person name="Ormond D."/>
            <person name="Rance R."/>
            <person name="Quail M.A."/>
            <person name="Parkhill J."/>
            <person name="Stephens R.S."/>
            <person name="Clarke I.N."/>
        </authorList>
    </citation>
    <scope>NUCLEOTIDE SEQUENCE [LARGE SCALE GENOMIC DNA]</scope>
    <source>
        <strain>ATCC VR-902B / DSM 19102 / 434/Bu</strain>
    </source>
</reference>
<comment type="function">
    <text evidence="1">Catalyzes the formation of 4-diphosphocytidyl-2-C-methyl-D-erythritol from CTP and 2-C-methyl-D-erythritol 4-phosphate (MEP).</text>
</comment>
<comment type="catalytic activity">
    <reaction evidence="1">
        <text>2-C-methyl-D-erythritol 4-phosphate + CTP + H(+) = 4-CDP-2-C-methyl-D-erythritol + diphosphate</text>
        <dbReference type="Rhea" id="RHEA:13429"/>
        <dbReference type="ChEBI" id="CHEBI:15378"/>
        <dbReference type="ChEBI" id="CHEBI:33019"/>
        <dbReference type="ChEBI" id="CHEBI:37563"/>
        <dbReference type="ChEBI" id="CHEBI:57823"/>
        <dbReference type="ChEBI" id="CHEBI:58262"/>
        <dbReference type="EC" id="2.7.7.60"/>
    </reaction>
</comment>
<comment type="pathway">
    <text evidence="1">Isoprenoid biosynthesis; isopentenyl diphosphate biosynthesis via DXP pathway; isopentenyl diphosphate from 1-deoxy-D-xylulose 5-phosphate: step 2/6.</text>
</comment>
<comment type="similarity">
    <text evidence="1">Belongs to the IspD/TarI cytidylyltransferase family. IspD subfamily.</text>
</comment>
<protein>
    <recommendedName>
        <fullName evidence="1">2-C-methyl-D-erythritol 4-phosphate cytidylyltransferase</fullName>
        <ecNumber evidence="1">2.7.7.60</ecNumber>
    </recommendedName>
    <alternativeName>
        <fullName evidence="1">4-diphosphocytidyl-2C-methyl-D-erythritol synthase</fullName>
    </alternativeName>
    <alternativeName>
        <fullName evidence="1">MEP cytidylyltransferase</fullName>
        <shortName evidence="1">MCT</shortName>
    </alternativeName>
</protein>
<sequence length="219" mass="24228">MNLSCSLVLLGGGKGERFNSLQPKQYTHLCGEPLILHALHAYQRLPFVQEVVVVCEEQYRELFLPYSVKFASPGTLRQDSVFSGLQQVFTPWVCIHDGVRPFVYADEVIEVCSAARKTGAAALASPATYTIKSCAPVRTLDRDALAVIHTPQCLDTEVLREGLLLARAMDFSLSDDTEAAELLGIEPTLVFSNRVQIKVTYPEDLLFAETLLSKSSTYK</sequence>
<gene>
    <name evidence="1" type="primary">ispD</name>
    <name type="ordered locus">CTL0722</name>
</gene>
<name>ISPD_CHLT2</name>